<sequence>MLPESVFLLLISHFLRAVTQPPFETEGVKQKLFHFSGHIDDFIVSRDQQTIYVASLNRLTSLSISNFSIQHEVSLGPVQDSPWCSADGKSCLKDNRPFPTDVRTKILQILPTNQILQCGSVKLGSCSTFNSKLSLITESTIAVAANSPDASTVSKIIDNRLIVAASATKESPYRDPFPAVAIRNLPGLNVENAGDLEGEAAVFLRAAYKNAFKFLYTFTHQHFVFVVAMVTPRESRLPMTTRLIRFCRNDTKFESYSEIELQCRGEDNTNYPFLNAIIQSYDKLIASFSTSSTSPKSSICVFSMQKVKLTFWYNVDRCRSGTDSIRLPHIGRDTKCVNKAHIPLDEDSCELGVGGSIELVEMSTKDIMGKVTSLMAVDQKAIFAGTTTSQIVMFKWDEHHSNQLEEYGRKEVGDGRTGSEVSKMVKFGDFVIVQMPYGIILEELSTCSHHSSCTECLVSVDPLCQWCHPTQSCTTSARCTSPVTSQCPIVDGDPIPSIVSVNSSTPISFNIHHLPPPVGFTYRCQFGTSTSSIKANWTTTGVSCPSEIFTSPNTFEILLLTSISNNPISRHNFTVYDCSGYGTCSSCMSSEYNCAWCSGLHKCSNSCGALEKSKACVKIQPMRLPIAIGSQQEIVLEASNLDTLDRRHEHFCKVNEQVSLAKIASDSIRCGKIQLTLSNTTSANMVVPLSLITRDSVIDIANVSLYSCTNLASDCSSCLALSPSLSCGWCNRQCSHECHESKATAVCDPPRIDKFEPTSGPIEGGTIIKIYGNDLGMSVEDVRGKIYVAGSRCNIVEYHVSNMIACQVDKGVSSGPIRISVGRATVAVAESSELYSFVRTSIFSAYPLYGPISGGTRITLYGQNLSSGSQTSVTVGGMPCPIERVNSSTVLTCLTPSGTRIGKSARVVVHVDHSQTQLDQPFEYRSDPSISSIFPMTSFKAGGRIVYVQGNSLNTVQTAKLFLISSPTPPFYIISDLAPCHIINSTLMTCMTPKILETITRRVEYTRQPVGFHMDNVTAVANLGRRIQMGIYPNPTLSPFKGVRYHQGEQSLILEGHNLNLAAEPNDFKIFIGNERCYVTLVDVRQLVCSGPVRQPKATDERGIPINGDNPLVTVIVGSLRMELGLIEYSDHALPSRLSLLILGLLLFIVVTLTVMCLVFKRRRQEREKEYRKIQLQMENLENNVRKECKQAFAELQTNLVLSPKSANSVNLGPELINFPHFVENLLWSDNNLTSAPSLARTLPVTLAQFHALLSFKGFIFTIVEAAESDVSISTSEKSMLASLLISVLLRNFSYCTEVVVDLLRAHIARSVQNKRAELLFRNSDSVVEKMFSKWMSICLYSHLTPQMNSYFYLYKALQYQTDKGPVDAVTGDARYTINEAKLLRESVDTKTLKIRVIPFEKCDESIDLEVHACDAICQVKQKVASAVYRETPYSQRPRITQFELKYKCPKRGDVKLTDVLPIETLSQKKLPVKLFTLADYGISDGCTLEMSPAVYTAESYRNSLADSGQSSWSSLDRCSPIYSSSKYYHLTNPSSGTMTFKKKSSNDSNLLPKSIPEVYLTRLLTSKGTVETYVEDFLESVLYMHDSSYPPILKFFFDILDREASVNGVSENICQQWKANGYVLRVWANFVRNPQLVFDVPHSISMDANLSTVAQTMMDCFSFSEPVLGAHSPSSRLLFAKDVARLRPLSVDLFKRVKNSPPLGMDELRTELVNMANDVSTCKGSSLALSELLSWVRGNGIRISQLLSSNEQFSQQRLPQKLSQVLHVCLETDNHIYSTISDYE</sequence>
<reference key="1">
    <citation type="submission" date="2004-02" db="EMBL/GenBank/DDBJ databases">
        <title>PLX-2, a Caenorhabditis elegans plexin, participates in mediating the signal of a class 2 semaphorin MAB-20.</title>
        <authorList>
            <person name="Nakao F."/>
            <person name="Kurokawa R."/>
            <person name="Liu Z."/>
            <person name="Gengyo-Ando K."/>
            <person name="Fujii T."/>
            <person name="Nukazuka A."/>
            <person name="Suto F."/>
            <person name="Shibata Y."/>
            <person name="Shioi G."/>
            <person name="Mitani S."/>
            <person name="Fujisawa H."/>
            <person name="Takagi S."/>
        </authorList>
    </citation>
    <scope>NUCLEOTIDE SEQUENCE [MRNA]</scope>
</reference>
<reference key="2">
    <citation type="journal article" date="1998" name="Science">
        <title>Genome sequence of the nematode C. elegans: a platform for investigating biology.</title>
        <authorList>
            <consortium name="The C. elegans sequencing consortium"/>
        </authorList>
    </citation>
    <scope>NUCLEOTIDE SEQUENCE [LARGE SCALE GENOMIC DNA]</scope>
    <source>
        <strain>Bristol N2</strain>
    </source>
</reference>
<reference key="3">
    <citation type="journal article" date="2004" name="Dev. Cell">
        <title>Integration of semaphorin-2A/MAB-20, ephrin-4, and UNC-129 TGF-beta signaling pathways regulates sorting of distinct sensory rays in C. elegans.</title>
        <authorList>
            <person name="Ikegami R."/>
            <person name="Zheng H."/>
            <person name="Ong S.-H."/>
            <person name="Culotti J.G."/>
        </authorList>
    </citation>
    <scope>FUNCTION</scope>
    <scope>TISSUE SPECIFICITY</scope>
    <scope>INTERACTION WITH MAB-20</scope>
</reference>
<reference key="4">
    <citation type="journal article" date="2007" name="Genetics">
        <title>The plexin PLX-2 and the ephrin EFN-4 have distinct roles in MAB-20/semaphorin 2A signaling in Caenorhabditis elegans morphogenesis.</title>
        <authorList>
            <person name="Nakao F."/>
            <person name="Hudson M.L."/>
            <person name="Suzuki M."/>
            <person name="Peckler Z."/>
            <person name="Kurokawa R."/>
            <person name="Liu Z."/>
            <person name="Gengyo-Ando K."/>
            <person name="Nukazuka A."/>
            <person name="Fujii T."/>
            <person name="Suto F."/>
            <person name="Shibata Y."/>
            <person name="Shioi G."/>
            <person name="Fujisawa H."/>
            <person name="Mitani S."/>
            <person name="Chisholm A.D."/>
            <person name="Takagi S."/>
        </authorList>
    </citation>
    <scope>FUNCTION</scope>
    <scope>TISSUE SPECIFICITY</scope>
    <scope>INTERACTION WITH MAB-20</scope>
</reference>
<reference key="5">
    <citation type="journal article" date="2014" name="Nat. Commun.">
        <title>Amino- and carboxyl-terminal domains of Filamin-A interact with CRMP1 to mediate Sema3A signalling.</title>
        <authorList>
            <person name="Nakamura F."/>
            <person name="Kumeta K."/>
            <person name="Hida T."/>
            <person name="Isono T."/>
            <person name="Nakayama Y."/>
            <person name="Kuramata-Matsuoka E."/>
            <person name="Yamashita N."/>
            <person name="Uchida Y."/>
            <person name="Ogura K."/>
            <person name="Gengyo-Ando K."/>
            <person name="Mitani S."/>
            <person name="Ogino T."/>
            <person name="Goshima Y."/>
        </authorList>
    </citation>
    <scope>FUNCTION</scope>
</reference>
<reference key="6">
    <citation type="journal article" date="2016" name="Development">
        <title>EFN-4 functions in LAD-2-mediated axon guidance in Caenorhabditis elegans.</title>
        <authorList>
            <person name="Dong B."/>
            <person name="Moseley-Alldredge M."/>
            <person name="Schwieterman A.A."/>
            <person name="Donelson C.J."/>
            <person name="McMurry J.L."/>
            <person name="Hudson M.L."/>
            <person name="Chen L."/>
        </authorList>
    </citation>
    <scope>FUNCTION</scope>
</reference>
<gene>
    <name evidence="9" type="primary">plx-2</name>
    <name evidence="9" type="ORF">K04B12.1</name>
</gene>
<organism>
    <name type="scientific">Caenorhabditis elegans</name>
    <dbReference type="NCBI Taxonomy" id="6239"/>
    <lineage>
        <taxon>Eukaryota</taxon>
        <taxon>Metazoa</taxon>
        <taxon>Ecdysozoa</taxon>
        <taxon>Nematoda</taxon>
        <taxon>Chromadorea</taxon>
        <taxon>Rhabditida</taxon>
        <taxon>Rhabditina</taxon>
        <taxon>Rhabditomorpha</taxon>
        <taxon>Rhabditoidea</taxon>
        <taxon>Rhabditidae</taxon>
        <taxon>Peloderinae</taxon>
        <taxon>Caenorhabditis</taxon>
    </lineage>
</organism>
<comment type="function">
    <text evidence="4 5 6 7">Involved as a receptor for mab-20/sema-2a in the formation or stabilization of cell-cell contacts at several stages of epithelial morphogenesis (PubMed:17507686). In early embryonic development, required for proper ventral closure of the epidermis (PubMed:17507686). During male tail morphogenesis, involved in precursor cell sorting and in the formation of distinct sensory rays (PubMed:15030761). Involved in axon guidance of SDQL neurons during neurogenesis (PubMed:26903502). Probably in response to stimulation by mab-20, regulates fln-1-mediated remodeling of the actin cytoskeleton and thus axon guidance and/or fasciculation of DD/VD neurons (PubMed:25358863).</text>
</comment>
<comment type="subunit">
    <text evidence="4 5">Interacts with mab-20.</text>
</comment>
<comment type="subcellular location">
    <subcellularLocation>
        <location evidence="8">Cell membrane</location>
        <topology evidence="8">Single-pass type I membrane protein</topology>
    </subcellularLocation>
</comment>
<comment type="tissue specificity">
    <text evidence="4 5">Expressed predominantly in the central nervous system from embryonic to adult stages. Expressed in early embryos in ventral neuroblasts. Expressed in neurons and in a subset of posterior lateral and ventral epidermal cells following epidermal enclosure. Present in neurons, muscles and weakly expressed in epidermal cells of the larval tail.</text>
</comment>
<comment type="similarity">
    <text evidence="8">Belongs to the plexin family.</text>
</comment>
<keyword id="KW-1003">Cell membrane</keyword>
<keyword id="KW-0175">Coiled coil</keyword>
<keyword id="KW-0217">Developmental protein</keyword>
<keyword id="KW-0221">Differentiation</keyword>
<keyword id="KW-1015">Disulfide bond</keyword>
<keyword id="KW-0325">Glycoprotein</keyword>
<keyword id="KW-0472">Membrane</keyword>
<keyword id="KW-0524">Neurogenesis</keyword>
<keyword id="KW-0675">Receptor</keyword>
<keyword id="KW-1185">Reference proteome</keyword>
<keyword id="KW-0677">Repeat</keyword>
<keyword id="KW-0732">Signal</keyword>
<keyword id="KW-0812">Transmembrane</keyword>
<keyword id="KW-1133">Transmembrane helix</keyword>
<evidence type="ECO:0000255" key="1"/>
<evidence type="ECO:0000255" key="2">
    <source>
        <dbReference type="PROSITE-ProRule" id="PRU00352"/>
    </source>
</evidence>
<evidence type="ECO:0000255" key="3">
    <source>
        <dbReference type="PROSITE-ProRule" id="PRU00498"/>
    </source>
</evidence>
<evidence type="ECO:0000269" key="4">
    <source>
    </source>
</evidence>
<evidence type="ECO:0000269" key="5">
    <source>
    </source>
</evidence>
<evidence type="ECO:0000269" key="6">
    <source>
    </source>
</evidence>
<evidence type="ECO:0000269" key="7">
    <source>
    </source>
</evidence>
<evidence type="ECO:0000305" key="8"/>
<evidence type="ECO:0000312" key="9">
    <source>
        <dbReference type="WormBase" id="K04B12.1"/>
    </source>
</evidence>
<accession>O45657</accession>
<accession>Q6BCZ2</accession>
<dbReference type="EMBL" id="AB162421">
    <property type="protein sequence ID" value="BAD36749.1"/>
    <property type="molecule type" value="mRNA"/>
</dbReference>
<dbReference type="EMBL" id="BX284602">
    <property type="protein sequence ID" value="CAB05755.5"/>
    <property type="molecule type" value="Genomic_DNA"/>
</dbReference>
<dbReference type="PIR" id="T23298">
    <property type="entry name" value="T23298"/>
</dbReference>
<dbReference type="RefSeq" id="NP_001364609.1">
    <property type="nucleotide sequence ID" value="NM_001377900.1"/>
</dbReference>
<dbReference type="RefSeq" id="NP_497001.4">
    <property type="nucleotide sequence ID" value="NM_064600.5"/>
</dbReference>
<dbReference type="SMR" id="O45657"/>
<dbReference type="BioGRID" id="40382">
    <property type="interactions" value="3"/>
</dbReference>
<dbReference type="FunCoup" id="O45657">
    <property type="interactions" value="3"/>
</dbReference>
<dbReference type="STRING" id="6239.K04B12.1.1"/>
<dbReference type="GlyCosmos" id="O45657">
    <property type="glycosylation" value="10 sites, No reported glycans"/>
</dbReference>
<dbReference type="PaxDb" id="6239-K04B12.1"/>
<dbReference type="EnsemblMetazoa" id="K04B12.1.1">
    <property type="protein sequence ID" value="K04B12.1.1"/>
    <property type="gene ID" value="WBGene00004048"/>
</dbReference>
<dbReference type="GeneID" id="175101"/>
<dbReference type="UCSC" id="K04B12.1">
    <property type="organism name" value="c. elegans"/>
</dbReference>
<dbReference type="AGR" id="WB:WBGene00004048"/>
<dbReference type="WormBase" id="K04B12.1">
    <property type="protein sequence ID" value="CE53912"/>
    <property type="gene ID" value="WBGene00004048"/>
    <property type="gene designation" value="plx-2"/>
</dbReference>
<dbReference type="eggNOG" id="KOG3610">
    <property type="taxonomic scope" value="Eukaryota"/>
</dbReference>
<dbReference type="GeneTree" id="ENSGT01020000230394"/>
<dbReference type="HOGENOM" id="CLU_001436_1_1_1"/>
<dbReference type="InParanoid" id="O45657"/>
<dbReference type="OrthoDB" id="125363at2759"/>
<dbReference type="PhylomeDB" id="O45657"/>
<dbReference type="Reactome" id="R-CEL-416482">
    <property type="pathway name" value="G alpha (12/13) signalling events"/>
</dbReference>
<dbReference type="Reactome" id="R-CEL-416550">
    <property type="pathway name" value="Sema4D mediated inhibition of cell attachment and migration"/>
</dbReference>
<dbReference type="Reactome" id="R-CEL-416572">
    <property type="pathway name" value="Sema4D induced cell migration and growth-cone collapse"/>
</dbReference>
<dbReference type="Reactome" id="R-CEL-9013405">
    <property type="pathway name" value="RHOD GTPase cycle"/>
</dbReference>
<dbReference type="PRO" id="PR:O45657"/>
<dbReference type="Proteomes" id="UP000001940">
    <property type="component" value="Chromosome II"/>
</dbReference>
<dbReference type="Bgee" id="WBGene00004048">
    <property type="expression patterns" value="Expressed in pharyngeal muscle cell (C elegans) and 3 other cell types or tissues"/>
</dbReference>
<dbReference type="GO" id="GO:0031252">
    <property type="term" value="C:cell leading edge"/>
    <property type="evidence" value="ECO:0000314"/>
    <property type="project" value="WormBase"/>
</dbReference>
<dbReference type="GO" id="GO:0009986">
    <property type="term" value="C:cell surface"/>
    <property type="evidence" value="ECO:0000314"/>
    <property type="project" value="WormBase"/>
</dbReference>
<dbReference type="GO" id="GO:0005886">
    <property type="term" value="C:plasma membrane"/>
    <property type="evidence" value="ECO:0000318"/>
    <property type="project" value="GO_Central"/>
</dbReference>
<dbReference type="GO" id="GO:0002116">
    <property type="term" value="C:semaphorin receptor complex"/>
    <property type="evidence" value="ECO:0000318"/>
    <property type="project" value="GO_Central"/>
</dbReference>
<dbReference type="GO" id="GO:0017154">
    <property type="term" value="F:semaphorin receptor activity"/>
    <property type="evidence" value="ECO:0000353"/>
    <property type="project" value="WormBase"/>
</dbReference>
<dbReference type="GO" id="GO:0007413">
    <property type="term" value="P:axonal fasciculation"/>
    <property type="evidence" value="ECO:0000315"/>
    <property type="project" value="WormBase"/>
</dbReference>
<dbReference type="GO" id="GO:0009792">
    <property type="term" value="P:embryo development ending in birth or egg hatching"/>
    <property type="evidence" value="ECO:0000316"/>
    <property type="project" value="WormBase"/>
</dbReference>
<dbReference type="GO" id="GO:0008045">
    <property type="term" value="P:motor neuron axon guidance"/>
    <property type="evidence" value="ECO:0000318"/>
    <property type="project" value="GO_Central"/>
</dbReference>
<dbReference type="GO" id="GO:0007162">
    <property type="term" value="P:negative regulation of cell adhesion"/>
    <property type="evidence" value="ECO:0000318"/>
    <property type="project" value="GO_Central"/>
</dbReference>
<dbReference type="GO" id="GO:0002119">
    <property type="term" value="P:nematode larval development"/>
    <property type="evidence" value="ECO:0000316"/>
    <property type="project" value="WormBase"/>
</dbReference>
<dbReference type="GO" id="GO:0045138">
    <property type="term" value="P:nematode male tail tip morphogenesis"/>
    <property type="evidence" value="ECO:0000316"/>
    <property type="project" value="WormBase"/>
</dbReference>
<dbReference type="GO" id="GO:0050772">
    <property type="term" value="P:positive regulation of axonogenesis"/>
    <property type="evidence" value="ECO:0000318"/>
    <property type="project" value="GO_Central"/>
</dbReference>
<dbReference type="GO" id="GO:1902667">
    <property type="term" value="P:regulation of axon guidance"/>
    <property type="evidence" value="ECO:0000315"/>
    <property type="project" value="UniProtKB"/>
</dbReference>
<dbReference type="GO" id="GO:0030334">
    <property type="term" value="P:regulation of cell migration"/>
    <property type="evidence" value="ECO:0000318"/>
    <property type="project" value="GO_Central"/>
</dbReference>
<dbReference type="GO" id="GO:0008360">
    <property type="term" value="P:regulation of cell shape"/>
    <property type="evidence" value="ECO:0000318"/>
    <property type="project" value="GO_Central"/>
</dbReference>
<dbReference type="GO" id="GO:0071526">
    <property type="term" value="P:semaphorin-plexin signaling pathway"/>
    <property type="evidence" value="ECO:0000318"/>
    <property type="project" value="GO_Central"/>
</dbReference>
<dbReference type="GO" id="GO:0097374">
    <property type="term" value="P:sensory neuron axon guidance"/>
    <property type="evidence" value="ECO:0000318"/>
    <property type="project" value="GO_Central"/>
</dbReference>
<dbReference type="GO" id="GO:0007416">
    <property type="term" value="P:synapse assembly"/>
    <property type="evidence" value="ECO:0000318"/>
    <property type="project" value="GO_Central"/>
</dbReference>
<dbReference type="CDD" id="cd01180">
    <property type="entry name" value="IPT_plexin_repeat1"/>
    <property type="match status" value="1"/>
</dbReference>
<dbReference type="CDD" id="cd01179">
    <property type="entry name" value="IPT_plexin_repeat2"/>
    <property type="match status" value="1"/>
</dbReference>
<dbReference type="CDD" id="cd12205">
    <property type="entry name" value="RasGAP_plexin"/>
    <property type="match status" value="1"/>
</dbReference>
<dbReference type="FunFam" id="2.60.40.10:FF:002574">
    <property type="entry name" value="Plexin B, putative"/>
    <property type="match status" value="1"/>
</dbReference>
<dbReference type="FunFam" id="2.130.10.10:FF:002478">
    <property type="entry name" value="Plexin-2"/>
    <property type="match status" value="1"/>
</dbReference>
<dbReference type="FunFam" id="2.60.40.10:FF:002442">
    <property type="entry name" value="Plexin-2"/>
    <property type="match status" value="1"/>
</dbReference>
<dbReference type="FunFam" id="2.60.40.10:FF:003360">
    <property type="entry name" value="Plexin-2"/>
    <property type="match status" value="1"/>
</dbReference>
<dbReference type="Gene3D" id="1.10.506.10">
    <property type="entry name" value="GTPase Activation - p120gap, domain 1"/>
    <property type="match status" value="2"/>
</dbReference>
<dbReference type="Gene3D" id="2.60.40.10">
    <property type="entry name" value="Immunoglobulins"/>
    <property type="match status" value="4"/>
</dbReference>
<dbReference type="Gene3D" id="2.130.10.10">
    <property type="entry name" value="YVTN repeat-like/Quinoprotein amine dehydrogenase"/>
    <property type="match status" value="1"/>
</dbReference>
<dbReference type="InterPro" id="IPR013783">
    <property type="entry name" value="Ig-like_fold"/>
</dbReference>
<dbReference type="InterPro" id="IPR014756">
    <property type="entry name" value="Ig_E-set"/>
</dbReference>
<dbReference type="InterPro" id="IPR002909">
    <property type="entry name" value="IPT_dom"/>
</dbReference>
<dbReference type="InterPro" id="IPR031148">
    <property type="entry name" value="Plexin"/>
</dbReference>
<dbReference type="InterPro" id="IPR013548">
    <property type="entry name" value="Plexin_cytoplasmic_RasGAP_dom"/>
</dbReference>
<dbReference type="InterPro" id="IPR046800">
    <property type="entry name" value="Plexin_RBD"/>
</dbReference>
<dbReference type="InterPro" id="IPR002165">
    <property type="entry name" value="Plexin_repeat"/>
</dbReference>
<dbReference type="InterPro" id="IPR016201">
    <property type="entry name" value="PSI"/>
</dbReference>
<dbReference type="InterPro" id="IPR008936">
    <property type="entry name" value="Rho_GTPase_activation_prot"/>
</dbReference>
<dbReference type="InterPro" id="IPR001627">
    <property type="entry name" value="Semap_dom"/>
</dbReference>
<dbReference type="InterPro" id="IPR036352">
    <property type="entry name" value="Semap_dom_sf"/>
</dbReference>
<dbReference type="InterPro" id="IPR015943">
    <property type="entry name" value="WD40/YVTN_repeat-like_dom_sf"/>
</dbReference>
<dbReference type="PANTHER" id="PTHR22625">
    <property type="entry name" value="PLEXIN"/>
    <property type="match status" value="1"/>
</dbReference>
<dbReference type="PANTHER" id="PTHR22625:SF44">
    <property type="entry name" value="PLEXIN-B"/>
    <property type="match status" value="1"/>
</dbReference>
<dbReference type="Pfam" id="PF08337">
    <property type="entry name" value="Plexin_cytopl"/>
    <property type="match status" value="1"/>
</dbReference>
<dbReference type="Pfam" id="PF20170">
    <property type="entry name" value="Plexin_RBD"/>
    <property type="match status" value="1"/>
</dbReference>
<dbReference type="Pfam" id="PF01437">
    <property type="entry name" value="PSI"/>
    <property type="match status" value="2"/>
</dbReference>
<dbReference type="Pfam" id="PF01833">
    <property type="entry name" value="TIG"/>
    <property type="match status" value="3"/>
</dbReference>
<dbReference type="SMART" id="SM00429">
    <property type="entry name" value="IPT"/>
    <property type="match status" value="3"/>
</dbReference>
<dbReference type="SMART" id="SM00423">
    <property type="entry name" value="PSI"/>
    <property type="match status" value="3"/>
</dbReference>
<dbReference type="SMART" id="SM00630">
    <property type="entry name" value="Sema"/>
    <property type="match status" value="1"/>
</dbReference>
<dbReference type="SUPFAM" id="SSF81296">
    <property type="entry name" value="E set domains"/>
    <property type="match status" value="3"/>
</dbReference>
<dbReference type="SUPFAM" id="SSF48350">
    <property type="entry name" value="GTPase activation domain, GAP"/>
    <property type="match status" value="1"/>
</dbReference>
<dbReference type="SUPFAM" id="SSF103575">
    <property type="entry name" value="Plexin repeat"/>
    <property type="match status" value="1"/>
</dbReference>
<dbReference type="SUPFAM" id="SSF101912">
    <property type="entry name" value="Sema domain"/>
    <property type="match status" value="1"/>
</dbReference>
<dbReference type="PROSITE" id="PS51004">
    <property type="entry name" value="SEMA"/>
    <property type="match status" value="1"/>
</dbReference>
<proteinExistence type="evidence at protein level"/>
<feature type="signal peptide" evidence="1">
    <location>
        <begin position="1"/>
        <end position="17"/>
    </location>
</feature>
<feature type="chain" id="PRO_0000248553" description="Plexin-2">
    <location>
        <begin position="18"/>
        <end position="1785"/>
    </location>
</feature>
<feature type="topological domain" description="Extracellular" evidence="1">
    <location>
        <begin position="18"/>
        <end position="1139"/>
    </location>
</feature>
<feature type="transmembrane region" description="Helical" evidence="1">
    <location>
        <begin position="1140"/>
        <end position="1160"/>
    </location>
</feature>
<feature type="topological domain" description="Cytoplasmic" evidence="1">
    <location>
        <begin position="1161"/>
        <end position="1785"/>
    </location>
</feature>
<feature type="domain" description="Sema" evidence="2">
    <location>
        <begin position="18"/>
        <end position="444"/>
    </location>
</feature>
<feature type="domain" description="PSI 1">
    <location>
        <begin position="446"/>
        <end position="488"/>
    </location>
</feature>
<feature type="domain" description="PSI 2">
    <location>
        <begin position="577"/>
        <end position="617"/>
    </location>
</feature>
<feature type="domain" description="PSI 3">
    <location>
        <begin position="707"/>
        <end position="748"/>
    </location>
</feature>
<feature type="domain" description="IPT/TIG 1">
    <location>
        <begin position="750"/>
        <end position="837"/>
    </location>
</feature>
<feature type="domain" description="IPT/TIG 2">
    <location>
        <begin position="840"/>
        <end position="924"/>
    </location>
</feature>
<feature type="domain" description="IPT/TIG 3">
    <location>
        <begin position="928"/>
        <end position="1040"/>
    </location>
</feature>
<feature type="coiled-coil region" evidence="1">
    <location>
        <begin position="1159"/>
        <end position="1197"/>
    </location>
</feature>
<feature type="glycosylation site" description="N-linked (GlcNAc...) asparagine" evidence="1">
    <location>
        <position position="66"/>
    </location>
</feature>
<feature type="glycosylation site" description="N-linked (GlcNAc...) asparagine" evidence="1">
    <location>
        <position position="249"/>
    </location>
</feature>
<feature type="glycosylation site" description="N-linked (GlcNAc...) asparagine" evidence="1">
    <location>
        <position position="502"/>
    </location>
</feature>
<feature type="glycosylation site" description="N-linked (GlcNAc...) asparagine" evidence="1">
    <location>
        <position position="536"/>
    </location>
</feature>
<feature type="glycosylation site" description="N-linked (GlcNAc...) asparagine" evidence="1">
    <location>
        <position position="572"/>
    </location>
</feature>
<feature type="glycosylation site" description="N-linked (GlcNAc...) asparagine" evidence="1">
    <location>
        <position position="679"/>
    </location>
</feature>
<feature type="glycosylation site" description="N-linked (GlcNAc...) asparagine" evidence="1">
    <location>
        <position position="702"/>
    </location>
</feature>
<feature type="glycosylation site" description="N-linked (GlcNAc...) asparagine" evidence="1">
    <location>
        <position position="864"/>
    </location>
</feature>
<feature type="glycosylation site" description="N-linked (GlcNAc...) asparagine" evidence="1">
    <location>
        <position position="886"/>
    </location>
</feature>
<feature type="glycosylation site" description="N-linked (GlcNAc...) asparagine" evidence="1">
    <location>
        <position position="984"/>
    </location>
</feature>
<feature type="glycosylation site" description="N-linked (GlcNAc...) asparagine" evidence="3">
    <location>
        <position position="1016"/>
    </location>
</feature>
<feature type="disulfide bond" evidence="2">
    <location>
        <begin position="84"/>
        <end position="91"/>
    </location>
</feature>
<feature type="disulfide bond" evidence="2">
    <location>
        <begin position="118"/>
        <end position="126"/>
    </location>
</feature>
<feature type="disulfide bond" evidence="2">
    <location>
        <begin position="247"/>
        <end position="349"/>
    </location>
</feature>
<feature type="disulfide bond" evidence="2">
    <location>
        <begin position="263"/>
        <end position="300"/>
    </location>
</feature>
<feature type="disulfide bond" evidence="2">
    <location>
        <begin position="318"/>
        <end position="336"/>
    </location>
</feature>
<feature type="disulfide bond" evidence="2">
    <location>
        <begin position="447"/>
        <end position="464"/>
    </location>
</feature>
<feature type="disulfide bond" evidence="2">
    <location>
        <begin position="453"/>
        <end position="487"/>
    </location>
</feature>
<feature type="disulfide bond" evidence="2">
    <location>
        <begin position="456"/>
        <end position="473"/>
    </location>
</feature>
<feature type="disulfide bond" evidence="2">
    <location>
        <begin position="467"/>
        <end position="479"/>
    </location>
</feature>
<feature type="disulfide bond" evidence="2">
    <location>
        <begin position="524"/>
        <end position="544"/>
    </location>
</feature>
<feature type="sequence conflict" description="In Ref. 1; BAD36749." evidence="8" ref="1">
    <location>
        <begin position="1010"/>
        <end position="1028"/>
    </location>
</feature>
<name>PLX2_CAEEL</name>
<protein>
    <recommendedName>
        <fullName>Plexin-2</fullName>
    </recommendedName>
</protein>